<accession>P0CW01</accession>
<feature type="chain" id="PRO_0000408004" description="Testis-specific Y-encoded protein 10">
    <location>
        <begin position="1"/>
        <end position="308"/>
    </location>
</feature>
<sequence>MRPEGSLTYRVPERLRQGFCGVGRAAQALVCASAKEGTAFRMEAVQEGAAGVESEQAALGEEAVLLLDDIMAEVEVVAEEEGLVERREEAQRAQQAVPGPGPMTPESALEELLAVQVELEPVNAQARKAFSRQREKMERRRKPHLDRRGAVIQSVPGFWANVIANHPQMSALITDEDEDMLSYMVSLEVEEEKHPVHLCKIMLFFRSNPYFQNKVITKEYLVNITEYRASHSTPIEWYPDYEVEAYRRRHHNSSLNFFNWFSDHNFAGSNKIAEILCKDLWRNPLQYYKRMKPPEEGTETSGDSQLLS</sequence>
<protein>
    <recommendedName>
        <fullName>Testis-specific Y-encoded protein 10</fullName>
    </recommendedName>
</protein>
<evidence type="ECO:0000250" key="1">
    <source>
        <dbReference type="UniProtKB" id="Q01534"/>
    </source>
</evidence>
<evidence type="ECO:0000269" key="2">
    <source>
    </source>
</evidence>
<evidence type="ECO:0000305" key="3"/>
<reference key="1">
    <citation type="journal article" date="2003" name="Nature">
        <title>The male-specific region of the human Y chromosome is a mosaic of discrete sequence classes.</title>
        <authorList>
            <person name="Skaletsky H."/>
            <person name="Kuroda-Kawaguchi T."/>
            <person name="Minx P.J."/>
            <person name="Cordum H.S."/>
            <person name="Hillier L.W."/>
            <person name="Brown L.G."/>
            <person name="Repping S."/>
            <person name="Pyntikova T."/>
            <person name="Ali J."/>
            <person name="Bieri T."/>
            <person name="Chinwalla A."/>
            <person name="Delehaunty A."/>
            <person name="Delehaunty K."/>
            <person name="Du H."/>
            <person name="Fewell G."/>
            <person name="Fulton L."/>
            <person name="Fulton R."/>
            <person name="Graves T.A."/>
            <person name="Hou S.-F."/>
            <person name="Latrielle P."/>
            <person name="Leonard S."/>
            <person name="Mardis E."/>
            <person name="Maupin R."/>
            <person name="McPherson J."/>
            <person name="Miner T."/>
            <person name="Nash W."/>
            <person name="Nguyen C."/>
            <person name="Ozersky P."/>
            <person name="Pepin K."/>
            <person name="Rock S."/>
            <person name="Rohlfing T."/>
            <person name="Scott K."/>
            <person name="Schultz B."/>
            <person name="Strong C."/>
            <person name="Tin-Wollam A."/>
            <person name="Yang S.-P."/>
            <person name="Waterston R.H."/>
            <person name="Wilson R.K."/>
            <person name="Rozen S."/>
            <person name="Page D.C."/>
        </authorList>
    </citation>
    <scope>NUCLEOTIDE SEQUENCE [LARGE SCALE GENOMIC DNA]</scope>
</reference>
<organism>
    <name type="scientific">Homo sapiens</name>
    <name type="common">Human</name>
    <dbReference type="NCBI Taxonomy" id="9606"/>
    <lineage>
        <taxon>Eukaryota</taxon>
        <taxon>Metazoa</taxon>
        <taxon>Chordata</taxon>
        <taxon>Craniata</taxon>
        <taxon>Vertebrata</taxon>
        <taxon>Euteleostomi</taxon>
        <taxon>Mammalia</taxon>
        <taxon>Eutheria</taxon>
        <taxon>Euarchontoglires</taxon>
        <taxon>Primates</taxon>
        <taxon>Haplorrhini</taxon>
        <taxon>Catarrhini</taxon>
        <taxon>Hominidae</taxon>
        <taxon>Homo</taxon>
    </lineage>
</organism>
<dbReference type="EMBL" id="AC006156">
    <property type="status" value="NOT_ANNOTATED_CDS"/>
    <property type="molecule type" value="Genomic_DNA"/>
</dbReference>
<dbReference type="CCDS" id="CCDS65365.1"/>
<dbReference type="RefSeq" id="NP_001071165.2">
    <property type="nucleotide sequence ID" value="NM_001077697.2"/>
</dbReference>
<dbReference type="RefSeq" id="NP_001269398.1">
    <property type="nucleotide sequence ID" value="NM_001282469.3"/>
</dbReference>
<dbReference type="SMR" id="P0CW01"/>
<dbReference type="FunCoup" id="P0CW01">
    <property type="interactions" value="42"/>
</dbReference>
<dbReference type="IntAct" id="P0CW01">
    <property type="interactions" value="2"/>
</dbReference>
<dbReference type="BioMuta" id="TSPY10"/>
<dbReference type="jPOST" id="P0CW01"/>
<dbReference type="MassIVE" id="P0CW01"/>
<dbReference type="Antibodypedia" id="66919">
    <property type="antibodies" value="21 antibodies from 5 providers"/>
</dbReference>
<dbReference type="DNASU" id="728137"/>
<dbReference type="Ensembl" id="ENST00000428845.6">
    <property type="protein sequence ID" value="ENSP00000406407.2"/>
    <property type="gene ID" value="ENSG00000236424.7"/>
</dbReference>
<dbReference type="GeneID" id="100289087"/>
<dbReference type="GeneID" id="728137"/>
<dbReference type="KEGG" id="hsa:100289087"/>
<dbReference type="KEGG" id="hsa:728137"/>
<dbReference type="MANE-Select" id="ENST00000428845.6">
    <property type="protein sequence ID" value="ENSP00000406407.2"/>
    <property type="RefSeq nucleotide sequence ID" value="NM_001282469.3"/>
    <property type="RefSeq protein sequence ID" value="NP_001269398.1"/>
</dbReference>
<dbReference type="UCSC" id="uc022cja.3">
    <property type="organism name" value="human"/>
</dbReference>
<dbReference type="AGR" id="HGNC:33876"/>
<dbReference type="AGR" id="HGNC:37473"/>
<dbReference type="CTD" id="100289087"/>
<dbReference type="CTD" id="728137"/>
<dbReference type="DisGeNET" id="100289087"/>
<dbReference type="DisGeNET" id="728137"/>
<dbReference type="GeneCards" id="TSPY10"/>
<dbReference type="HGNC" id="HGNC:37473">
    <property type="gene designation" value="TSPY10"/>
</dbReference>
<dbReference type="HPA" id="ENSG00000236424">
    <property type="expression patterns" value="Tissue enriched (testis)"/>
</dbReference>
<dbReference type="neXtProt" id="NX_P0CW01"/>
<dbReference type="VEuPathDB" id="HostDB:ENSG00000236424"/>
<dbReference type="GeneTree" id="ENSGT00940000162417"/>
<dbReference type="HOGENOM" id="CLU_051687_1_0_1"/>
<dbReference type="InParanoid" id="P0CW01"/>
<dbReference type="OMA" id="QMLISEM"/>
<dbReference type="PAN-GO" id="P0CW01">
    <property type="GO annotations" value="4 GO annotations based on evolutionary models"/>
</dbReference>
<dbReference type="PhylomeDB" id="P0CW01"/>
<dbReference type="PathwayCommons" id="P0CW01"/>
<dbReference type="SignaLink" id="P0CW01"/>
<dbReference type="BioGRID-ORCS" id="728395">
    <property type="hits" value="9 hits in 180 CRISPR screens"/>
</dbReference>
<dbReference type="GenomeRNAi" id="728395"/>
<dbReference type="Pharos" id="P0CW01">
    <property type="development level" value="Tdark"/>
</dbReference>
<dbReference type="PRO" id="PR:P0CW01"/>
<dbReference type="Proteomes" id="UP000005640">
    <property type="component" value="Chromosome Y"/>
</dbReference>
<dbReference type="RNAct" id="P0CW01">
    <property type="molecule type" value="protein"/>
</dbReference>
<dbReference type="Bgee" id="ENSG00000236424">
    <property type="expression patterns" value="Expressed in male germ line stem cell (sensu Vertebrata) in testis and 21 other cell types or tissues"/>
</dbReference>
<dbReference type="ExpressionAtlas" id="P0CW01">
    <property type="expression patterns" value="baseline and differential"/>
</dbReference>
<dbReference type="GO" id="GO:0000785">
    <property type="term" value="C:chromatin"/>
    <property type="evidence" value="ECO:0000318"/>
    <property type="project" value="GO_Central"/>
</dbReference>
<dbReference type="GO" id="GO:0005737">
    <property type="term" value="C:cytoplasm"/>
    <property type="evidence" value="ECO:0007669"/>
    <property type="project" value="UniProtKB-SubCell"/>
</dbReference>
<dbReference type="GO" id="GO:0005634">
    <property type="term" value="C:nucleus"/>
    <property type="evidence" value="ECO:0000318"/>
    <property type="project" value="GO_Central"/>
</dbReference>
<dbReference type="GO" id="GO:0003682">
    <property type="term" value="F:chromatin binding"/>
    <property type="evidence" value="ECO:0000318"/>
    <property type="project" value="GO_Central"/>
</dbReference>
<dbReference type="GO" id="GO:0042393">
    <property type="term" value="F:histone binding"/>
    <property type="evidence" value="ECO:0000318"/>
    <property type="project" value="GO_Central"/>
</dbReference>
<dbReference type="GO" id="GO:0030154">
    <property type="term" value="P:cell differentiation"/>
    <property type="evidence" value="ECO:0007669"/>
    <property type="project" value="UniProtKB-KW"/>
</dbReference>
<dbReference type="GO" id="GO:0007506">
    <property type="term" value="P:gonadal mesoderm development"/>
    <property type="evidence" value="ECO:0007669"/>
    <property type="project" value="UniProtKB-KW"/>
</dbReference>
<dbReference type="GO" id="GO:0006334">
    <property type="term" value="P:nucleosome assembly"/>
    <property type="evidence" value="ECO:0007669"/>
    <property type="project" value="InterPro"/>
</dbReference>
<dbReference type="GO" id="GO:0007283">
    <property type="term" value="P:spermatogenesis"/>
    <property type="evidence" value="ECO:0007669"/>
    <property type="project" value="UniProtKB-KW"/>
</dbReference>
<dbReference type="FunFam" id="1.20.5.1500:FF:000007">
    <property type="entry name" value="Testis-specific Y-encoded protein 10"/>
    <property type="match status" value="1"/>
</dbReference>
<dbReference type="FunFam" id="3.30.1120.90:FF:000002">
    <property type="entry name" value="Testis-specific Y-encoded-like protein 2"/>
    <property type="match status" value="1"/>
</dbReference>
<dbReference type="Gene3D" id="1.20.5.1500">
    <property type="match status" value="1"/>
</dbReference>
<dbReference type="Gene3D" id="3.30.1120.90">
    <property type="entry name" value="Nucleosome assembly protein"/>
    <property type="match status" value="1"/>
</dbReference>
<dbReference type="InterPro" id="IPR037231">
    <property type="entry name" value="NAP-like_sf"/>
</dbReference>
<dbReference type="InterPro" id="IPR002164">
    <property type="entry name" value="NAP_family"/>
</dbReference>
<dbReference type="PANTHER" id="PTHR11875">
    <property type="entry name" value="TESTIS-SPECIFIC Y-ENCODED PROTEIN"/>
    <property type="match status" value="1"/>
</dbReference>
<dbReference type="Pfam" id="PF00956">
    <property type="entry name" value="NAP"/>
    <property type="match status" value="1"/>
</dbReference>
<dbReference type="SUPFAM" id="SSF143113">
    <property type="entry name" value="NAP-like"/>
    <property type="match status" value="1"/>
</dbReference>
<proteinExistence type="evidence at protein level"/>
<comment type="function">
    <text evidence="1">May be involved in sperm differentiation and proliferation.</text>
</comment>
<comment type="interaction">
    <interactant intactId="EBI-19697726">
        <id>P0CW01</id>
    </interactant>
    <interactant intactId="EBI-374980">
        <id>O00311</id>
        <label>CDC7</label>
    </interactant>
    <organismsDiffer>false</organismsDiffer>
    <experiments>3</experiments>
</comment>
<comment type="interaction">
    <interactant intactId="EBI-19697726">
        <id>P0CW01</id>
    </interactant>
    <interactant intactId="EBI-744973">
        <id>Q9C005</id>
        <label>DPY30</label>
    </interactant>
    <organismsDiffer>false</organismsDiffer>
    <experiments>4</experiments>
</comment>
<comment type="subcellular location">
    <subcellularLocation>
        <location evidence="1">Cytoplasm</location>
    </subcellularLocation>
    <subcellularLocation>
        <location evidence="1">Nucleus</location>
    </subcellularLocation>
</comment>
<comment type="polymorphism">
    <text evidence="2">Maps to a tandemly repeated region on chromosome Yp11; additionally at least one copy is reported originating from Yq. The gene is thought to be present with an inter-individual variation in copy number and between 20 and 60 copies per Y chromosome are expected. 35 tandemly repeated gene copies on Yp11 originating from one individual have been reported (PubMed:12815422).</text>
</comment>
<comment type="similarity">
    <text evidence="3">Belongs to the nucleosome assembly protein (NAP) family.</text>
</comment>
<name>TSPYA_HUMAN</name>
<gene>
    <name type="primary">TSPY10</name>
</gene>
<keyword id="KW-0963">Cytoplasm</keyword>
<keyword id="KW-0217">Developmental protein</keyword>
<keyword id="KW-0221">Differentiation</keyword>
<keyword id="KW-0334">Gonadal differentiation</keyword>
<keyword id="KW-0539">Nucleus</keyword>
<keyword id="KW-1185">Reference proteome</keyword>
<keyword id="KW-0744">Spermatogenesis</keyword>